<keyword id="KW-0093">Biotin biosynthesis</keyword>
<keyword id="KW-0963">Cytoplasm</keyword>
<keyword id="KW-0378">Hydrolase</keyword>
<keyword id="KW-0719">Serine esterase</keyword>
<protein>
    <recommendedName>
        <fullName evidence="1">Pimeloyl-[acyl-carrier protein] methyl ester esterase</fullName>
        <ecNumber evidence="1">3.1.1.85</ecNumber>
    </recommendedName>
    <alternativeName>
        <fullName evidence="1">Biotin synthesis protein BioH</fullName>
    </alternativeName>
    <alternativeName>
        <fullName evidence="1">Carboxylesterase BioH</fullName>
    </alternativeName>
</protein>
<reference key="1">
    <citation type="journal article" date="2004" name="Nat. Genet.">
        <title>Evidence in the Legionella pneumophila genome for exploitation of host cell functions and high genome plasticity.</title>
        <authorList>
            <person name="Cazalet C."/>
            <person name="Rusniok C."/>
            <person name="Brueggemann H."/>
            <person name="Zidane N."/>
            <person name="Magnier A."/>
            <person name="Ma L."/>
            <person name="Tichit M."/>
            <person name="Jarraud S."/>
            <person name="Bouchier C."/>
            <person name="Vandenesch F."/>
            <person name="Kunst F."/>
            <person name="Etienne J."/>
            <person name="Glaser P."/>
            <person name="Buchrieser C."/>
        </authorList>
    </citation>
    <scope>NUCLEOTIDE SEQUENCE [LARGE SCALE GENOMIC DNA]</scope>
    <source>
        <strain>Lens</strain>
    </source>
</reference>
<sequence length="239" mass="27649">MNIHLDKHGQGMPLVLFHGWGFDSQIWQPIIPYLKPKYQIILVDLPGFGLTPMMDWESFKKNLFDQLPDKFALAGWSMGGLYATRLAIEEPARVQYLINITSSPRFISDIDWPGVAEEVFVNFYNNLSKDINKTLKEFISLQLNKMKFDFKIGNPPSPEGLAFGLEILGTWDFREQLKQISIPTVYLFGRLDPITPAKTMAIMEKNYPNFKYVLFNRAAHMPFLSHTDLFITMMDEFIK</sequence>
<organism>
    <name type="scientific">Legionella pneumophila (strain Lens)</name>
    <dbReference type="NCBI Taxonomy" id="297245"/>
    <lineage>
        <taxon>Bacteria</taxon>
        <taxon>Pseudomonadati</taxon>
        <taxon>Pseudomonadota</taxon>
        <taxon>Gammaproteobacteria</taxon>
        <taxon>Legionellales</taxon>
        <taxon>Legionellaceae</taxon>
        <taxon>Legionella</taxon>
    </lineage>
</organism>
<proteinExistence type="inferred from homology"/>
<dbReference type="EC" id="3.1.1.85" evidence="1"/>
<dbReference type="EMBL" id="CR628337">
    <property type="protein sequence ID" value="CAH15794.1"/>
    <property type="molecule type" value="Genomic_DNA"/>
</dbReference>
<dbReference type="RefSeq" id="WP_011215591.1">
    <property type="nucleotide sequence ID" value="NC_006369.1"/>
</dbReference>
<dbReference type="SMR" id="Q5WW99"/>
<dbReference type="ESTHER" id="legpa-q5x590">
    <property type="family name" value="BioH"/>
</dbReference>
<dbReference type="KEGG" id="lpf:lpl1554"/>
<dbReference type="LegioList" id="lpl1554"/>
<dbReference type="HOGENOM" id="CLU_020336_12_2_6"/>
<dbReference type="UniPathway" id="UPA00078"/>
<dbReference type="Proteomes" id="UP000002517">
    <property type="component" value="Chromosome"/>
</dbReference>
<dbReference type="GO" id="GO:0005737">
    <property type="term" value="C:cytoplasm"/>
    <property type="evidence" value="ECO:0007669"/>
    <property type="project" value="UniProtKB-SubCell"/>
</dbReference>
<dbReference type="GO" id="GO:0016020">
    <property type="term" value="C:membrane"/>
    <property type="evidence" value="ECO:0007669"/>
    <property type="project" value="TreeGrafter"/>
</dbReference>
<dbReference type="GO" id="GO:0090499">
    <property type="term" value="F:pimelyl-[acyl-carrier protein] methyl ester esterase activity"/>
    <property type="evidence" value="ECO:0007669"/>
    <property type="project" value="UniProtKB-EC"/>
</dbReference>
<dbReference type="GO" id="GO:0009102">
    <property type="term" value="P:biotin biosynthetic process"/>
    <property type="evidence" value="ECO:0007669"/>
    <property type="project" value="UniProtKB-UniRule"/>
</dbReference>
<dbReference type="Gene3D" id="3.40.50.1820">
    <property type="entry name" value="alpha/beta hydrolase"/>
    <property type="match status" value="1"/>
</dbReference>
<dbReference type="HAMAP" id="MF_01260">
    <property type="entry name" value="Carboxylester"/>
    <property type="match status" value="1"/>
</dbReference>
<dbReference type="InterPro" id="IPR000073">
    <property type="entry name" value="AB_hydrolase_1"/>
</dbReference>
<dbReference type="InterPro" id="IPR029058">
    <property type="entry name" value="AB_hydrolase_fold"/>
</dbReference>
<dbReference type="InterPro" id="IPR050266">
    <property type="entry name" value="AB_hydrolase_sf"/>
</dbReference>
<dbReference type="InterPro" id="IPR010076">
    <property type="entry name" value="BioH"/>
</dbReference>
<dbReference type="PANTHER" id="PTHR43798:SF31">
    <property type="entry name" value="AB HYDROLASE SUPERFAMILY PROTEIN YCLE"/>
    <property type="match status" value="1"/>
</dbReference>
<dbReference type="PANTHER" id="PTHR43798">
    <property type="entry name" value="MONOACYLGLYCEROL LIPASE"/>
    <property type="match status" value="1"/>
</dbReference>
<dbReference type="Pfam" id="PF00561">
    <property type="entry name" value="Abhydrolase_1"/>
    <property type="match status" value="1"/>
</dbReference>
<dbReference type="SUPFAM" id="SSF53474">
    <property type="entry name" value="alpha/beta-Hydrolases"/>
    <property type="match status" value="1"/>
</dbReference>
<gene>
    <name evidence="1" type="primary">bioH</name>
    <name type="ordered locus">lpl1554</name>
</gene>
<comment type="function">
    <text evidence="1">The physiological role of BioH is to remove the methyl group introduced by BioC when the pimeloyl moiety is complete. It allows to synthesize pimeloyl-ACP via the fatty acid synthetic pathway through the hydrolysis of the ester bonds of pimeloyl-ACP esters.</text>
</comment>
<comment type="catalytic activity">
    <reaction evidence="1">
        <text>6-carboxyhexanoyl-[ACP] methyl ester + H2O = 6-carboxyhexanoyl-[ACP] + methanol + H(+)</text>
        <dbReference type="Rhea" id="RHEA:42700"/>
        <dbReference type="Rhea" id="RHEA-COMP:9955"/>
        <dbReference type="Rhea" id="RHEA-COMP:10186"/>
        <dbReference type="ChEBI" id="CHEBI:15377"/>
        <dbReference type="ChEBI" id="CHEBI:15378"/>
        <dbReference type="ChEBI" id="CHEBI:17790"/>
        <dbReference type="ChEBI" id="CHEBI:78846"/>
        <dbReference type="ChEBI" id="CHEBI:82735"/>
        <dbReference type="EC" id="3.1.1.85"/>
    </reaction>
</comment>
<comment type="pathway">
    <text evidence="1">Cofactor biosynthesis; biotin biosynthesis.</text>
</comment>
<comment type="subunit">
    <text evidence="1">Monomer.</text>
</comment>
<comment type="subcellular location">
    <subcellularLocation>
        <location evidence="1">Cytoplasm</location>
    </subcellularLocation>
</comment>
<comment type="similarity">
    <text evidence="1">Belongs to the AB hydrolase superfamily. Carboxylesterase BioH family.</text>
</comment>
<name>BIOH_LEGPL</name>
<accession>Q5WW99</accession>
<feature type="chain" id="PRO_0000204480" description="Pimeloyl-[acyl-carrier protein] methyl ester esterase">
    <location>
        <begin position="1"/>
        <end position="239"/>
    </location>
</feature>
<feature type="active site" description="Nucleophile" evidence="1">
    <location>
        <position position="77"/>
    </location>
</feature>
<feature type="active site" evidence="1">
    <location>
        <position position="192"/>
    </location>
</feature>
<feature type="active site" evidence="1">
    <location>
        <position position="220"/>
    </location>
</feature>
<feature type="binding site" evidence="1">
    <location>
        <position position="20"/>
    </location>
    <ligand>
        <name>substrate</name>
    </ligand>
</feature>
<feature type="binding site" evidence="1">
    <location>
        <begin position="77"/>
        <end position="78"/>
    </location>
    <ligand>
        <name>substrate</name>
    </ligand>
</feature>
<feature type="binding site" evidence="1">
    <location>
        <begin position="138"/>
        <end position="142"/>
    </location>
    <ligand>
        <name>substrate</name>
    </ligand>
</feature>
<feature type="binding site" evidence="1">
    <location>
        <position position="220"/>
    </location>
    <ligand>
        <name>substrate</name>
    </ligand>
</feature>
<evidence type="ECO:0000255" key="1">
    <source>
        <dbReference type="HAMAP-Rule" id="MF_01260"/>
    </source>
</evidence>